<accession>P68111</accession>
<accession>P12803</accession>
<organism>
    <name type="scientific">Chlorocebus aethiops</name>
    <name type="common">Green monkey</name>
    <name type="synonym">Cercopithecus aethiops</name>
    <dbReference type="NCBI Taxonomy" id="9534"/>
    <lineage>
        <taxon>Eukaryota</taxon>
        <taxon>Metazoa</taxon>
        <taxon>Chordata</taxon>
        <taxon>Craniata</taxon>
        <taxon>Vertebrata</taxon>
        <taxon>Euteleostomi</taxon>
        <taxon>Mammalia</taxon>
        <taxon>Eutheria</taxon>
        <taxon>Euarchontoglires</taxon>
        <taxon>Primates</taxon>
        <taxon>Haplorrhini</taxon>
        <taxon>Catarrhini</taxon>
        <taxon>Cercopithecidae</taxon>
        <taxon>Cercopithecinae</taxon>
        <taxon>Chlorocebus</taxon>
    </lineage>
</organism>
<gene>
    <name type="primary">FGA</name>
</gene>
<feature type="peptide" id="PRO_0000009012" description="Fibrinopeptide A">
    <location>
        <begin position="1"/>
        <end position="16"/>
    </location>
</feature>
<feature type="non-terminal residue">
    <location>
        <position position="16"/>
    </location>
</feature>
<keyword id="KW-1064">Adaptive immunity</keyword>
<keyword id="KW-0094">Blood coagulation</keyword>
<keyword id="KW-0175">Coiled coil</keyword>
<keyword id="KW-0903">Direct protein sequencing</keyword>
<keyword id="KW-1015">Disulfide bond</keyword>
<keyword id="KW-0356">Hemostasis</keyword>
<keyword id="KW-0391">Immunity</keyword>
<keyword id="KW-0399">Innate immunity</keyword>
<keyword id="KW-0964">Secreted</keyword>
<sequence>ADTGEGDFLAEGGGVR</sequence>
<evidence type="ECO:0000250" key="1">
    <source>
        <dbReference type="UniProtKB" id="E9PV24"/>
    </source>
</evidence>
<evidence type="ECO:0000250" key="2">
    <source>
        <dbReference type="UniProtKB" id="P02671"/>
    </source>
</evidence>
<name>FIBA_CHLAE</name>
<proteinExistence type="evidence at protein level"/>
<dbReference type="SMR" id="P68111"/>
<dbReference type="GO" id="GO:0005576">
    <property type="term" value="C:extracellular region"/>
    <property type="evidence" value="ECO:0007669"/>
    <property type="project" value="UniProtKB-SubCell"/>
</dbReference>
<dbReference type="GO" id="GO:0002250">
    <property type="term" value="P:adaptive immune response"/>
    <property type="evidence" value="ECO:0007669"/>
    <property type="project" value="UniProtKB-KW"/>
</dbReference>
<dbReference type="GO" id="GO:0007596">
    <property type="term" value="P:blood coagulation"/>
    <property type="evidence" value="ECO:0007669"/>
    <property type="project" value="UniProtKB-KW"/>
</dbReference>
<dbReference type="GO" id="GO:0045087">
    <property type="term" value="P:innate immune response"/>
    <property type="evidence" value="ECO:0007669"/>
    <property type="project" value="UniProtKB-KW"/>
</dbReference>
<reference key="1">
    <citation type="journal article" date="1965" name="Acta Chem. Scand.">
        <title>Studies on fibrinopeptides from primates.</title>
        <authorList>
            <person name="Blombaeck B."/>
            <person name="Blombaeck M."/>
            <person name="Grondahl N.J."/>
            <person name="Guthrie C."/>
            <person name="Hinton M."/>
        </authorList>
    </citation>
    <scope>PROTEIN SEQUENCE</scope>
</reference>
<protein>
    <recommendedName>
        <fullName>Fibrinogen alpha chain</fullName>
    </recommendedName>
    <component>
        <recommendedName>
            <fullName>Fibrinopeptide A</fullName>
        </recommendedName>
    </component>
</protein>
<comment type="function">
    <text evidence="1">Cleaved by the protease thrombin to yield monomers which, together with fibrinogen beta (FGB) and fibrinogen gamma (FGG), polymerize to form an insoluble fibrin matrix. Fibrin has a major function in hemostasis as one of the primary components of blood clots. In addition, functions during the early stages of wound repair to stabilize the lesion and guide cell migration during re-epithelialization. Was originally thought to be essential for platelet aggregation, based on in vitro studies using anticoagulated blood. However, subsequent studies have shown that it is not absolutely required for thrombus formation in vivo. Enhances expression of SELP in activated platelets via an ITGB3-dependent pathway. Maternal fibrinogen is essential for successful pregnancy. Fibrin deposition is also associated with infection, where it protects against IFNG-mediated hemorrhage. May also facilitate the immune response via both innate and T-cell mediated pathways.</text>
</comment>
<comment type="subunit">
    <text evidence="2">Heterohexamer; disulfide linked. Contains 2 sets of 3 non-identical chains (alpha, beta and gamma). The 2 heterotrimers are in head to head conformation with the N-termini in a small central domain (By similarity).</text>
</comment>
<comment type="subcellular location">
    <subcellularLocation>
        <location>Secreted</location>
    </subcellularLocation>
</comment>
<comment type="domain">
    <text evidence="2">A long coiled coil structure formed by 3 polypeptide chains connects the central nodule to the C-terminal domains (distal nodules). The long C-terminal ends of the alpha chains fold back, contributing a fourth strand to the coiled coil structure.</text>
</comment>
<comment type="PTM">
    <text>Conversion of fibrinogen to fibrin is triggered by thrombin, which cleaves fibrinopeptides A and B from alpha and beta chains, and thus exposes the N-terminal polymerization sites responsible for the formation of the soft clot. The soft clot is converted into the hard clot by factor XIIIA which catalyzes the epsilon-(gamma-glutamyl)lysine cross-linking between gamma chains (stronger) and between alpha chains (weaker) of different monomers.</text>
</comment>
<comment type="PTM">
    <text>Forms F13A-mediated cross-links between a glutamine and the epsilon-amino group of a lysine residue, forming fibronectin-fibrinogen heteropolymers.</text>
</comment>